<proteinExistence type="inferred from homology"/>
<dbReference type="EMBL" id="CR954246">
    <property type="protein sequence ID" value="CAI85857.1"/>
    <property type="molecule type" value="Genomic_DNA"/>
</dbReference>
<dbReference type="SMR" id="Q3IDW1"/>
<dbReference type="STRING" id="326442.PSHAa0775"/>
<dbReference type="KEGG" id="pha:PSHAa0775"/>
<dbReference type="PATRIC" id="fig|326442.8.peg.738"/>
<dbReference type="eggNOG" id="COG2063">
    <property type="taxonomic scope" value="Bacteria"/>
</dbReference>
<dbReference type="HOGENOM" id="CLU_069313_0_2_6"/>
<dbReference type="BioCyc" id="PHAL326442:PSHA_RS03780-MONOMER"/>
<dbReference type="Proteomes" id="UP000006843">
    <property type="component" value="Chromosome I"/>
</dbReference>
<dbReference type="GO" id="GO:0009427">
    <property type="term" value="C:bacterial-type flagellum basal body, distal rod, L ring"/>
    <property type="evidence" value="ECO:0007669"/>
    <property type="project" value="InterPro"/>
</dbReference>
<dbReference type="GO" id="GO:0009279">
    <property type="term" value="C:cell outer membrane"/>
    <property type="evidence" value="ECO:0007669"/>
    <property type="project" value="UniProtKB-SubCell"/>
</dbReference>
<dbReference type="GO" id="GO:0003774">
    <property type="term" value="F:cytoskeletal motor activity"/>
    <property type="evidence" value="ECO:0007669"/>
    <property type="project" value="InterPro"/>
</dbReference>
<dbReference type="GO" id="GO:0071973">
    <property type="term" value="P:bacterial-type flagellum-dependent cell motility"/>
    <property type="evidence" value="ECO:0007669"/>
    <property type="project" value="InterPro"/>
</dbReference>
<dbReference type="HAMAP" id="MF_00415">
    <property type="entry name" value="FlgH"/>
    <property type="match status" value="1"/>
</dbReference>
<dbReference type="InterPro" id="IPR000527">
    <property type="entry name" value="Flag_Lring"/>
</dbReference>
<dbReference type="NCBIfam" id="NF001304">
    <property type="entry name" value="PRK00249.1-4"/>
    <property type="match status" value="1"/>
</dbReference>
<dbReference type="NCBIfam" id="NF009338">
    <property type="entry name" value="PRK12698.1"/>
    <property type="match status" value="1"/>
</dbReference>
<dbReference type="PANTHER" id="PTHR34933">
    <property type="entry name" value="FLAGELLAR L-RING PROTEIN"/>
    <property type="match status" value="1"/>
</dbReference>
<dbReference type="PANTHER" id="PTHR34933:SF1">
    <property type="entry name" value="FLAGELLAR L-RING PROTEIN"/>
    <property type="match status" value="1"/>
</dbReference>
<dbReference type="Pfam" id="PF02107">
    <property type="entry name" value="FlgH"/>
    <property type="match status" value="1"/>
</dbReference>
<dbReference type="PRINTS" id="PR01008">
    <property type="entry name" value="FLGLRINGFLGH"/>
</dbReference>
<dbReference type="PROSITE" id="PS51257">
    <property type="entry name" value="PROKAR_LIPOPROTEIN"/>
    <property type="match status" value="1"/>
</dbReference>
<organism>
    <name type="scientific">Pseudoalteromonas translucida (strain TAC 125)</name>
    <dbReference type="NCBI Taxonomy" id="326442"/>
    <lineage>
        <taxon>Bacteria</taxon>
        <taxon>Pseudomonadati</taxon>
        <taxon>Pseudomonadota</taxon>
        <taxon>Gammaproteobacteria</taxon>
        <taxon>Alteromonadales</taxon>
        <taxon>Pseudoalteromonadaceae</taxon>
        <taxon>Pseudoalteromonas</taxon>
    </lineage>
</organism>
<keyword id="KW-0975">Bacterial flagellum</keyword>
<keyword id="KW-0998">Cell outer membrane</keyword>
<keyword id="KW-0449">Lipoprotein</keyword>
<keyword id="KW-0472">Membrane</keyword>
<keyword id="KW-0564">Palmitate</keyword>
<keyword id="KW-1185">Reference proteome</keyword>
<keyword id="KW-0732">Signal</keyword>
<comment type="function">
    <text evidence="1">Assembles around the rod to form the L-ring and probably protects the motor/basal body from shearing forces during rotation.</text>
</comment>
<comment type="subunit">
    <text evidence="1">The basal body constitutes a major portion of the flagellar organelle and consists of four rings (L,P,S, and M) mounted on a central rod.</text>
</comment>
<comment type="subcellular location">
    <subcellularLocation>
        <location evidence="1">Cell outer membrane</location>
        <topology evidence="1">Lipid-anchor</topology>
    </subcellularLocation>
    <subcellularLocation>
        <location evidence="1">Bacterial flagellum basal body</location>
    </subcellularLocation>
</comment>
<comment type="similarity">
    <text evidence="1">Belongs to the FlgH family.</text>
</comment>
<accession>Q3IDW1</accession>
<reference key="1">
    <citation type="journal article" date="2005" name="Genome Res.">
        <title>Coping with cold: the genome of the versatile marine Antarctica bacterium Pseudoalteromonas haloplanktis TAC125.</title>
        <authorList>
            <person name="Medigue C."/>
            <person name="Krin E."/>
            <person name="Pascal G."/>
            <person name="Barbe V."/>
            <person name="Bernsel A."/>
            <person name="Bertin P.N."/>
            <person name="Cheung F."/>
            <person name="Cruveiller S."/>
            <person name="D'Amico S."/>
            <person name="Duilio A."/>
            <person name="Fang G."/>
            <person name="Feller G."/>
            <person name="Ho C."/>
            <person name="Mangenot S."/>
            <person name="Marino G."/>
            <person name="Nilsson J."/>
            <person name="Parrilli E."/>
            <person name="Rocha E.P.C."/>
            <person name="Rouy Z."/>
            <person name="Sekowska A."/>
            <person name="Tutino M.L."/>
            <person name="Vallenet D."/>
            <person name="von Heijne G."/>
            <person name="Danchin A."/>
        </authorList>
    </citation>
    <scope>NUCLEOTIDE SEQUENCE [LARGE SCALE GENOMIC DNA]</scope>
    <source>
        <strain>TAC 125</strain>
    </source>
</reference>
<feature type="signal peptide" evidence="1">
    <location>
        <begin position="1"/>
        <end position="16"/>
    </location>
</feature>
<feature type="chain" id="PRO_0000236827" description="Flagellar L-ring protein">
    <location>
        <begin position="17"/>
        <end position="227"/>
    </location>
</feature>
<feature type="lipid moiety-binding region" description="N-palmitoyl cysteine" evidence="1">
    <location>
        <position position="17"/>
    </location>
</feature>
<feature type="lipid moiety-binding region" description="S-diacylglycerol cysteine" evidence="1">
    <location>
        <position position="17"/>
    </location>
</feature>
<gene>
    <name evidence="1" type="primary">flgH</name>
    <name type="ordered locus">PSHAa0775</name>
</gene>
<evidence type="ECO:0000255" key="1">
    <source>
        <dbReference type="HAMAP-Rule" id="MF_00415"/>
    </source>
</evidence>
<name>FLGH_PSET1</name>
<sequence length="227" mass="24430">MRNIILFAAGTLLLSGCVSTQNSDVVQDDPYYAPMYPEPNVEPAVANGSLFNTYLSNDLYADKKALRTGDIITVKLQESTQASKAAKTETDKQSDAKLDPVIGLGGLPVNIGGDSIQFGIGSDASFKGDSKSNQSNSLAGDISVNVMRVLPNGNLVIRGEKWLTLNSGEEFIRLEGLVRPEDVTADNTVQSNRIANARIQYSGKGQTQEAQSAGWLTRFFSSSLFPF</sequence>
<protein>
    <recommendedName>
        <fullName evidence="1">Flagellar L-ring protein</fullName>
    </recommendedName>
    <alternativeName>
        <fullName evidence="1">Basal body L-ring protein</fullName>
    </alternativeName>
</protein>